<organism>
    <name type="scientific">Yersinia pestis bv. Antiqua (strain Nepal516)</name>
    <dbReference type="NCBI Taxonomy" id="377628"/>
    <lineage>
        <taxon>Bacteria</taxon>
        <taxon>Pseudomonadati</taxon>
        <taxon>Pseudomonadota</taxon>
        <taxon>Gammaproteobacteria</taxon>
        <taxon>Enterobacterales</taxon>
        <taxon>Yersiniaceae</taxon>
        <taxon>Yersinia</taxon>
    </lineage>
</organism>
<comment type="function">
    <text evidence="1">Part of the twin-arginine translocation (Tat) system that transports large folded proteins containing a characteristic twin-arginine motif in their signal peptide across membranes. Together with TatC, TatB is part of a receptor directly interacting with Tat signal peptides. TatB may form an oligomeric binding site that transiently accommodates folded Tat precursor proteins before their translocation.</text>
</comment>
<comment type="subunit">
    <text evidence="1">The Tat system comprises two distinct complexes: a TatABC complex, containing multiple copies of TatA, TatB and TatC subunits, and a separate TatA complex, containing only TatA subunits. Substrates initially bind to the TatABC complex, which probably triggers association of the separate TatA complex to form the active translocon.</text>
</comment>
<comment type="subcellular location">
    <subcellularLocation>
        <location evidence="1">Cell inner membrane</location>
        <topology evidence="1">Single-pass membrane protein</topology>
    </subcellularLocation>
</comment>
<comment type="similarity">
    <text evidence="1">Belongs to the TatB family.</text>
</comment>
<keyword id="KW-0997">Cell inner membrane</keyword>
<keyword id="KW-1003">Cell membrane</keyword>
<keyword id="KW-0472">Membrane</keyword>
<keyword id="KW-0653">Protein transport</keyword>
<keyword id="KW-0811">Translocation</keyword>
<keyword id="KW-0812">Transmembrane</keyword>
<keyword id="KW-1133">Transmembrane helix</keyword>
<keyword id="KW-0813">Transport</keyword>
<accession>Q1CNB0</accession>
<accession>D1Q180</accession>
<feature type="chain" id="PRO_0000301253" description="Sec-independent protein translocase protein TatB">
    <location>
        <begin position="1"/>
        <end position="220"/>
    </location>
</feature>
<feature type="transmembrane region" description="Helical" evidence="1">
    <location>
        <begin position="1"/>
        <end position="21"/>
    </location>
</feature>
<feature type="region of interest" description="Disordered" evidence="2">
    <location>
        <begin position="192"/>
        <end position="220"/>
    </location>
</feature>
<proteinExistence type="inferred from homology"/>
<evidence type="ECO:0000255" key="1">
    <source>
        <dbReference type="HAMAP-Rule" id="MF_00237"/>
    </source>
</evidence>
<evidence type="ECO:0000256" key="2">
    <source>
        <dbReference type="SAM" id="MobiDB-lite"/>
    </source>
</evidence>
<name>TATB_YERPN</name>
<dbReference type="EMBL" id="CP000305">
    <property type="protein sequence ID" value="ABG16520.1"/>
    <property type="molecule type" value="Genomic_DNA"/>
</dbReference>
<dbReference type="EMBL" id="ACNQ01000001">
    <property type="protein sequence ID" value="EEO78634.1"/>
    <property type="molecule type" value="Genomic_DNA"/>
</dbReference>
<dbReference type="RefSeq" id="WP_002211537.1">
    <property type="nucleotide sequence ID" value="NZ_ACNQ01000001.1"/>
</dbReference>
<dbReference type="SMR" id="Q1CNB0"/>
<dbReference type="GeneID" id="57974931"/>
<dbReference type="KEGG" id="ypn:YPN_0187"/>
<dbReference type="HOGENOM" id="CLU_086034_1_0_6"/>
<dbReference type="Proteomes" id="UP000008936">
    <property type="component" value="Chromosome"/>
</dbReference>
<dbReference type="GO" id="GO:0033281">
    <property type="term" value="C:TAT protein transport complex"/>
    <property type="evidence" value="ECO:0007669"/>
    <property type="project" value="UniProtKB-UniRule"/>
</dbReference>
<dbReference type="GO" id="GO:0008320">
    <property type="term" value="F:protein transmembrane transporter activity"/>
    <property type="evidence" value="ECO:0007669"/>
    <property type="project" value="UniProtKB-UniRule"/>
</dbReference>
<dbReference type="GO" id="GO:0043953">
    <property type="term" value="P:protein transport by the Tat complex"/>
    <property type="evidence" value="ECO:0007669"/>
    <property type="project" value="UniProtKB-UniRule"/>
</dbReference>
<dbReference type="Gene3D" id="1.20.5.3310">
    <property type="match status" value="1"/>
</dbReference>
<dbReference type="HAMAP" id="MF_00237">
    <property type="entry name" value="TatB"/>
    <property type="match status" value="1"/>
</dbReference>
<dbReference type="InterPro" id="IPR018448">
    <property type="entry name" value="TatB"/>
</dbReference>
<dbReference type="NCBIfam" id="TIGR01410">
    <property type="entry name" value="tatB"/>
    <property type="match status" value="1"/>
</dbReference>
<dbReference type="PANTHER" id="PTHR33162">
    <property type="entry name" value="SEC-INDEPENDENT PROTEIN TRANSLOCASE PROTEIN TATA, CHLOROPLASTIC"/>
    <property type="match status" value="1"/>
</dbReference>
<dbReference type="PANTHER" id="PTHR33162:SF1">
    <property type="entry name" value="SEC-INDEPENDENT PROTEIN TRANSLOCASE PROTEIN TATA, CHLOROPLASTIC"/>
    <property type="match status" value="1"/>
</dbReference>
<dbReference type="PRINTS" id="PR01506">
    <property type="entry name" value="TATBPROTEIN"/>
</dbReference>
<protein>
    <recommendedName>
        <fullName evidence="1">Sec-independent protein translocase protein TatB</fullName>
    </recommendedName>
</protein>
<reference key="1">
    <citation type="journal article" date="2006" name="J. Bacteriol.">
        <title>Complete genome sequence of Yersinia pestis strains Antiqua and Nepal516: evidence of gene reduction in an emerging pathogen.</title>
        <authorList>
            <person name="Chain P.S.G."/>
            <person name="Hu P."/>
            <person name="Malfatti S.A."/>
            <person name="Radnedge L."/>
            <person name="Larimer F."/>
            <person name="Vergez L.M."/>
            <person name="Worsham P."/>
            <person name="Chu M.C."/>
            <person name="Andersen G.L."/>
        </authorList>
    </citation>
    <scope>NUCLEOTIDE SEQUENCE [LARGE SCALE GENOMIC DNA]</scope>
    <source>
        <strain>Nepal516</strain>
    </source>
</reference>
<reference key="2">
    <citation type="submission" date="2009-04" db="EMBL/GenBank/DDBJ databases">
        <title>Yersinia pestis Nepal516A whole genome shotgun sequencing project.</title>
        <authorList>
            <person name="Plunkett G. III"/>
            <person name="Anderson B.D."/>
            <person name="Baumler D.J."/>
            <person name="Burland V."/>
            <person name="Cabot E.L."/>
            <person name="Glasner J.D."/>
            <person name="Mau B."/>
            <person name="Neeno-Eckwall E."/>
            <person name="Perna N.T."/>
            <person name="Munk A.C."/>
            <person name="Tapia R."/>
            <person name="Green L.D."/>
            <person name="Rogers Y.C."/>
            <person name="Detter J.C."/>
            <person name="Bruce D.C."/>
            <person name="Brettin T.S."/>
        </authorList>
    </citation>
    <scope>NUCLEOTIDE SEQUENCE [LARGE SCALE GENOMIC DNA]</scope>
    <source>
        <strain>Nepal516</strain>
    </source>
</reference>
<gene>
    <name evidence="1" type="primary">tatB</name>
    <name type="ordered locus">YPN_0187</name>
    <name type="ORF">YP516_0153</name>
</gene>
<sequence length="220" mass="23279">MFDIGFSELLLVLVIGLVVLGPERLPVAVRTVSGWIRTLRSLAATVQNELAQELKLQELQDSLKKVEQAGLQNLTPELKASMDELKEAAEALKRSYHVDAGSEAPHTIHNPLVTEPEAIHDGVTPAEPATQVSALAQAPNILEAGTASVVDSVVEAAPVTTVKSVVQGEVLVKSTPVQEVGLADVMDKPVTKQQIDTIDSHGTDLSSAGPSRIHQPGGDQ</sequence>